<keyword id="KW-1003">Cell membrane</keyword>
<keyword id="KW-0342">GTP-binding</keyword>
<keyword id="KW-0449">Lipoprotein</keyword>
<keyword id="KW-0472">Membrane</keyword>
<keyword id="KW-0547">Nucleotide-binding</keyword>
<keyword id="KW-0636">Prenylation</keyword>
<keyword id="KW-0653">Protein transport</keyword>
<keyword id="KW-1185">Reference proteome</keyword>
<keyword id="KW-0813">Transport</keyword>
<accession>P17609</accession>
<feature type="chain" id="PRO_0000121309" description="GTP-binding protein ypt2">
    <location>
        <begin position="1"/>
        <end position="200"/>
    </location>
</feature>
<feature type="short sequence motif" description="Effector region" evidence="2">
    <location>
        <begin position="38"/>
        <end position="46"/>
    </location>
</feature>
<feature type="binding site" evidence="1">
    <location>
        <begin position="16"/>
        <end position="23"/>
    </location>
    <ligand>
        <name>GTP</name>
        <dbReference type="ChEBI" id="CHEBI:37565"/>
    </ligand>
</feature>
<feature type="binding site" evidence="1">
    <location>
        <begin position="64"/>
        <end position="68"/>
    </location>
    <ligand>
        <name>GTP</name>
        <dbReference type="ChEBI" id="CHEBI:37565"/>
    </ligand>
</feature>
<feature type="binding site" evidence="1">
    <location>
        <begin position="122"/>
        <end position="125"/>
    </location>
    <ligand>
        <name>GTP</name>
        <dbReference type="ChEBI" id="CHEBI:37565"/>
    </ligand>
</feature>
<feature type="lipid moiety-binding region" description="S-geranylgeranyl cysteine" evidence="1">
    <location>
        <position position="199"/>
    </location>
</feature>
<feature type="lipid moiety-binding region" description="S-geranylgeranyl cysteine" evidence="1">
    <location>
        <position position="200"/>
    </location>
</feature>
<protein>
    <recommendedName>
        <fullName>GTP-binding protein ypt2</fullName>
    </recommendedName>
    <alternativeName>
        <fullName>SEC4 homolog</fullName>
    </alternativeName>
</protein>
<gene>
    <name type="primary">ypt2</name>
    <name type="ORF">SPAC9E9.07c</name>
</gene>
<dbReference type="EMBL" id="X52469">
    <property type="protein sequence ID" value="CAA36707.1"/>
    <property type="molecule type" value="Genomic_DNA"/>
</dbReference>
<dbReference type="EMBL" id="X52864">
    <property type="protein sequence ID" value="CAA37045.1"/>
    <property type="molecule type" value="Genomic_DNA"/>
</dbReference>
<dbReference type="EMBL" id="CU329670">
    <property type="protein sequence ID" value="CAB16405.1"/>
    <property type="molecule type" value="Genomic_DNA"/>
</dbReference>
<dbReference type="PIR" id="S12790">
    <property type="entry name" value="S12790"/>
</dbReference>
<dbReference type="RefSeq" id="NP_594580.1">
    <property type="nucleotide sequence ID" value="NM_001020009.2"/>
</dbReference>
<dbReference type="SMR" id="P17609"/>
<dbReference type="BioGRID" id="279707">
    <property type="interactions" value="7"/>
</dbReference>
<dbReference type="FunCoup" id="P17609">
    <property type="interactions" value="444"/>
</dbReference>
<dbReference type="STRING" id="284812.P17609"/>
<dbReference type="iPTMnet" id="P17609"/>
<dbReference type="PaxDb" id="4896-SPAC9E9.07c.1"/>
<dbReference type="EnsemblFungi" id="SPAC9E9.07c.1">
    <property type="protein sequence ID" value="SPAC9E9.07c.1:pep"/>
    <property type="gene ID" value="SPAC9E9.07c"/>
</dbReference>
<dbReference type="GeneID" id="2543280"/>
<dbReference type="KEGG" id="spo:2543280"/>
<dbReference type="PomBase" id="SPAC9E9.07c">
    <property type="gene designation" value="ypt2"/>
</dbReference>
<dbReference type="VEuPathDB" id="FungiDB:SPAC9E9.07c"/>
<dbReference type="eggNOG" id="KOG0078">
    <property type="taxonomic scope" value="Eukaryota"/>
</dbReference>
<dbReference type="HOGENOM" id="CLU_041217_23_1_1"/>
<dbReference type="InParanoid" id="P17609"/>
<dbReference type="OMA" id="ENIRTWF"/>
<dbReference type="PhylomeDB" id="P17609"/>
<dbReference type="Reactome" id="R-SPO-6798695">
    <property type="pathway name" value="Neutrophil degranulation"/>
</dbReference>
<dbReference type="Reactome" id="R-SPO-8873719">
    <property type="pathway name" value="RAB geranylgeranylation"/>
</dbReference>
<dbReference type="Reactome" id="R-SPO-8876198">
    <property type="pathway name" value="RAB GEFs exchange GTP for GDP on RABs"/>
</dbReference>
<dbReference type="PRO" id="PR:P17609"/>
<dbReference type="Proteomes" id="UP000002485">
    <property type="component" value="Chromosome I"/>
</dbReference>
<dbReference type="GO" id="GO:0005829">
    <property type="term" value="C:cytosol"/>
    <property type="evidence" value="ECO:0007005"/>
    <property type="project" value="PomBase"/>
</dbReference>
<dbReference type="GO" id="GO:0005768">
    <property type="term" value="C:endosome"/>
    <property type="evidence" value="ECO:0000318"/>
    <property type="project" value="GO_Central"/>
</dbReference>
<dbReference type="GO" id="GO:0035974">
    <property type="term" value="C:meiotic spindle pole body"/>
    <property type="evidence" value="ECO:0000314"/>
    <property type="project" value="PomBase"/>
</dbReference>
<dbReference type="GO" id="GO:0005634">
    <property type="term" value="C:nucleus"/>
    <property type="evidence" value="ECO:0007005"/>
    <property type="project" value="PomBase"/>
</dbReference>
<dbReference type="GO" id="GO:0005886">
    <property type="term" value="C:plasma membrane"/>
    <property type="evidence" value="ECO:0000318"/>
    <property type="project" value="GO_Central"/>
</dbReference>
<dbReference type="GO" id="GO:0005628">
    <property type="term" value="C:prospore membrane"/>
    <property type="evidence" value="ECO:0000314"/>
    <property type="project" value="PomBase"/>
</dbReference>
<dbReference type="GO" id="GO:0005525">
    <property type="term" value="F:GTP binding"/>
    <property type="evidence" value="ECO:0000314"/>
    <property type="project" value="PomBase"/>
</dbReference>
<dbReference type="GO" id="GO:0003924">
    <property type="term" value="F:GTPase activity"/>
    <property type="evidence" value="ECO:0000314"/>
    <property type="project" value="PomBase"/>
</dbReference>
<dbReference type="GO" id="GO:0006887">
    <property type="term" value="P:exocytosis"/>
    <property type="evidence" value="ECO:0000315"/>
    <property type="project" value="PomBase"/>
</dbReference>
<dbReference type="GO" id="GO:0006893">
    <property type="term" value="P:Golgi to plasma membrane transport"/>
    <property type="evidence" value="ECO:0000266"/>
    <property type="project" value="PomBase"/>
</dbReference>
<dbReference type="GO" id="GO:0006886">
    <property type="term" value="P:intracellular protein transport"/>
    <property type="evidence" value="ECO:0000305"/>
    <property type="project" value="PomBase"/>
</dbReference>
<dbReference type="GO" id="GO:0006906">
    <property type="term" value="P:vesicle fusion"/>
    <property type="evidence" value="ECO:0000266"/>
    <property type="project" value="PomBase"/>
</dbReference>
<dbReference type="CDD" id="cd01867">
    <property type="entry name" value="Rab8_Rab10_Rab13_like"/>
    <property type="match status" value="1"/>
</dbReference>
<dbReference type="FunFam" id="3.40.50.300:FF:000363">
    <property type="entry name" value="Secretion related GTPase srgA"/>
    <property type="match status" value="1"/>
</dbReference>
<dbReference type="Gene3D" id="3.40.50.300">
    <property type="entry name" value="P-loop containing nucleotide triphosphate hydrolases"/>
    <property type="match status" value="1"/>
</dbReference>
<dbReference type="InterPro" id="IPR027417">
    <property type="entry name" value="P-loop_NTPase"/>
</dbReference>
<dbReference type="InterPro" id="IPR005225">
    <property type="entry name" value="Small_GTP-bd"/>
</dbReference>
<dbReference type="InterPro" id="IPR001806">
    <property type="entry name" value="Small_GTPase"/>
</dbReference>
<dbReference type="InterPro" id="IPR050305">
    <property type="entry name" value="Small_GTPase_Rab"/>
</dbReference>
<dbReference type="NCBIfam" id="TIGR00231">
    <property type="entry name" value="small_GTP"/>
    <property type="match status" value="1"/>
</dbReference>
<dbReference type="PANTHER" id="PTHR47980">
    <property type="entry name" value="LD44762P"/>
    <property type="match status" value="1"/>
</dbReference>
<dbReference type="Pfam" id="PF00071">
    <property type="entry name" value="Ras"/>
    <property type="match status" value="1"/>
</dbReference>
<dbReference type="PRINTS" id="PR00449">
    <property type="entry name" value="RASTRNSFRMNG"/>
</dbReference>
<dbReference type="SMART" id="SM00175">
    <property type="entry name" value="RAB"/>
    <property type="match status" value="1"/>
</dbReference>
<dbReference type="SMART" id="SM00176">
    <property type="entry name" value="RAN"/>
    <property type="match status" value="1"/>
</dbReference>
<dbReference type="SMART" id="SM00173">
    <property type="entry name" value="RAS"/>
    <property type="match status" value="1"/>
</dbReference>
<dbReference type="SMART" id="SM00174">
    <property type="entry name" value="RHO"/>
    <property type="match status" value="1"/>
</dbReference>
<dbReference type="SUPFAM" id="SSF52540">
    <property type="entry name" value="P-loop containing nucleoside triphosphate hydrolases"/>
    <property type="match status" value="1"/>
</dbReference>
<dbReference type="PROSITE" id="PS51419">
    <property type="entry name" value="RAB"/>
    <property type="match status" value="1"/>
</dbReference>
<reference key="1">
    <citation type="journal article" date="1990" name="EMBO J.">
        <title>Structural and functional analysis of ypt2, an essential ras-related gene in the fission yeast Schizosaccharomyces pombe encoding a Sec4 protein homologue.</title>
        <authorList>
            <person name="Hengst L."/>
            <person name="Lehmeier T."/>
            <person name="Gallwitz D."/>
        </authorList>
    </citation>
    <scope>NUCLEOTIDE SEQUENCE [GENOMIC DNA]</scope>
    <source>
        <strain>972 / ATCC 24843</strain>
    </source>
</reference>
<reference key="2">
    <citation type="journal article" date="1990" name="Nucleic Acids Res.">
        <title>Novel YPT1-related genes from Schizosaccharomyces pombe.</title>
        <authorList>
            <person name="Fawell E."/>
            <person name="Hook S."/>
            <person name="Sweet D."/>
            <person name="Armstrong J."/>
        </authorList>
    </citation>
    <scope>NUCLEOTIDE SEQUENCE [GENOMIC DNA]</scope>
</reference>
<reference key="3">
    <citation type="journal article" date="2002" name="Nature">
        <title>The genome sequence of Schizosaccharomyces pombe.</title>
        <authorList>
            <person name="Wood V."/>
            <person name="Gwilliam R."/>
            <person name="Rajandream M.A."/>
            <person name="Lyne M.H."/>
            <person name="Lyne R."/>
            <person name="Stewart A."/>
            <person name="Sgouros J.G."/>
            <person name="Peat N."/>
            <person name="Hayles J."/>
            <person name="Baker S.G."/>
            <person name="Basham D."/>
            <person name="Bowman S."/>
            <person name="Brooks K."/>
            <person name="Brown D."/>
            <person name="Brown S."/>
            <person name="Chillingworth T."/>
            <person name="Churcher C.M."/>
            <person name="Collins M."/>
            <person name="Connor R."/>
            <person name="Cronin A."/>
            <person name="Davis P."/>
            <person name="Feltwell T."/>
            <person name="Fraser A."/>
            <person name="Gentles S."/>
            <person name="Goble A."/>
            <person name="Hamlin N."/>
            <person name="Harris D.E."/>
            <person name="Hidalgo J."/>
            <person name="Hodgson G."/>
            <person name="Holroyd S."/>
            <person name="Hornsby T."/>
            <person name="Howarth S."/>
            <person name="Huckle E.J."/>
            <person name="Hunt S."/>
            <person name="Jagels K."/>
            <person name="James K.D."/>
            <person name="Jones L."/>
            <person name="Jones M."/>
            <person name="Leather S."/>
            <person name="McDonald S."/>
            <person name="McLean J."/>
            <person name="Mooney P."/>
            <person name="Moule S."/>
            <person name="Mungall K.L."/>
            <person name="Murphy L.D."/>
            <person name="Niblett D."/>
            <person name="Odell C."/>
            <person name="Oliver K."/>
            <person name="O'Neil S."/>
            <person name="Pearson D."/>
            <person name="Quail M.A."/>
            <person name="Rabbinowitsch E."/>
            <person name="Rutherford K.M."/>
            <person name="Rutter S."/>
            <person name="Saunders D."/>
            <person name="Seeger K."/>
            <person name="Sharp S."/>
            <person name="Skelton J."/>
            <person name="Simmonds M.N."/>
            <person name="Squares R."/>
            <person name="Squares S."/>
            <person name="Stevens K."/>
            <person name="Taylor K."/>
            <person name="Taylor R.G."/>
            <person name="Tivey A."/>
            <person name="Walsh S.V."/>
            <person name="Warren T."/>
            <person name="Whitehead S."/>
            <person name="Woodward J.R."/>
            <person name="Volckaert G."/>
            <person name="Aert R."/>
            <person name="Robben J."/>
            <person name="Grymonprez B."/>
            <person name="Weltjens I."/>
            <person name="Vanstreels E."/>
            <person name="Rieger M."/>
            <person name="Schaefer M."/>
            <person name="Mueller-Auer S."/>
            <person name="Gabel C."/>
            <person name="Fuchs M."/>
            <person name="Duesterhoeft A."/>
            <person name="Fritzc C."/>
            <person name="Holzer E."/>
            <person name="Moestl D."/>
            <person name="Hilbert H."/>
            <person name="Borzym K."/>
            <person name="Langer I."/>
            <person name="Beck A."/>
            <person name="Lehrach H."/>
            <person name="Reinhardt R."/>
            <person name="Pohl T.M."/>
            <person name="Eger P."/>
            <person name="Zimmermann W."/>
            <person name="Wedler H."/>
            <person name="Wambutt R."/>
            <person name="Purnelle B."/>
            <person name="Goffeau A."/>
            <person name="Cadieu E."/>
            <person name="Dreano S."/>
            <person name="Gloux S."/>
            <person name="Lelaure V."/>
            <person name="Mottier S."/>
            <person name="Galibert F."/>
            <person name="Aves S.J."/>
            <person name="Xiang Z."/>
            <person name="Hunt C."/>
            <person name="Moore K."/>
            <person name="Hurst S.M."/>
            <person name="Lucas M."/>
            <person name="Rochet M."/>
            <person name="Gaillardin C."/>
            <person name="Tallada V.A."/>
            <person name="Garzon A."/>
            <person name="Thode G."/>
            <person name="Daga R.R."/>
            <person name="Cruzado L."/>
            <person name="Jimenez J."/>
            <person name="Sanchez M."/>
            <person name="del Rey F."/>
            <person name="Benito J."/>
            <person name="Dominguez A."/>
            <person name="Revuelta J.L."/>
            <person name="Moreno S."/>
            <person name="Armstrong J."/>
            <person name="Forsburg S.L."/>
            <person name="Cerutti L."/>
            <person name="Lowe T."/>
            <person name="McCombie W.R."/>
            <person name="Paulsen I."/>
            <person name="Potashkin J."/>
            <person name="Shpakovski G.V."/>
            <person name="Ussery D."/>
            <person name="Barrell B.G."/>
            <person name="Nurse P."/>
        </authorList>
    </citation>
    <scope>NUCLEOTIDE SEQUENCE [LARGE SCALE GENOMIC DNA]</scope>
    <source>
        <strain>972 / ATCC 24843</strain>
    </source>
</reference>
<evidence type="ECO:0000250" key="1"/>
<evidence type="ECO:0000305" key="2"/>
<organism>
    <name type="scientific">Schizosaccharomyces pombe (strain 972 / ATCC 24843)</name>
    <name type="common">Fission yeast</name>
    <dbReference type="NCBI Taxonomy" id="284812"/>
    <lineage>
        <taxon>Eukaryota</taxon>
        <taxon>Fungi</taxon>
        <taxon>Dikarya</taxon>
        <taxon>Ascomycota</taxon>
        <taxon>Taphrinomycotina</taxon>
        <taxon>Schizosaccharomycetes</taxon>
        <taxon>Schizosaccharomycetales</taxon>
        <taxon>Schizosaccharomycetaceae</taxon>
        <taxon>Schizosaccharomyces</taxon>
    </lineage>
</organism>
<name>YPT2_SCHPO</name>
<proteinExistence type="inferred from homology"/>
<sequence length="200" mass="22755">MSTKSYDYLIKLLLIGDSGVGKSCLLLRFSEDSFTPSFITTIGIDFKIRTIELDGKRIKLQIWDTAGQERFRTITTAYYRGAMGILLLYDVTDKKSFDNVRTWFSNVEQHASENVYKILIGNKCDCEDQRQVSFEQGQALADELGVKFLEASAKTNVNVDEAFFTLAREIKKQKIDAENEFSNQANNVDLGNDRTVKRCC</sequence>
<comment type="function">
    <text evidence="1">Protein transport. Probably involved in vesicular traffic (By similarity).</text>
</comment>
<comment type="subcellular location">
    <subcellularLocation>
        <location evidence="2">Cell membrane</location>
        <topology evidence="2">Lipid-anchor</topology>
        <orientation evidence="2">Cytoplasmic side</orientation>
    </subcellularLocation>
</comment>
<comment type="miscellaneous">
    <text>This protein is essential for cell viability.</text>
</comment>
<comment type="similarity">
    <text evidence="2">Belongs to the small GTPase superfamily. Rab family.</text>
</comment>